<dbReference type="EMBL" id="U00017">
    <property type="protein sequence ID" value="AAA17208.1"/>
    <property type="molecule type" value="Genomic_DNA"/>
</dbReference>
<dbReference type="EMBL" id="AL035310">
    <property type="protein sequence ID" value="CAA22939.1"/>
    <property type="molecule type" value="Genomic_DNA"/>
</dbReference>
<dbReference type="EMBL" id="AL583921">
    <property type="protein sequence ID" value="CAC31710.1"/>
    <property type="molecule type" value="Genomic_DNA"/>
</dbReference>
<dbReference type="PIR" id="S72868">
    <property type="entry name" value="S72868"/>
</dbReference>
<dbReference type="RefSeq" id="NP_301953.1">
    <property type="nucleotide sequence ID" value="NC_002677.1"/>
</dbReference>
<dbReference type="RefSeq" id="WP_010908274.1">
    <property type="nucleotide sequence ID" value="NC_002677.1"/>
</dbReference>
<dbReference type="SMR" id="P54076"/>
<dbReference type="STRING" id="272631.gene:17575163"/>
<dbReference type="KEGG" id="mle:ML1329"/>
<dbReference type="PATRIC" id="fig|272631.5.peg.2449"/>
<dbReference type="Leproma" id="ML1329"/>
<dbReference type="eggNOG" id="COG2378">
    <property type="taxonomic scope" value="Bacteria"/>
</dbReference>
<dbReference type="HOGENOM" id="CLU_041141_3_1_11"/>
<dbReference type="OrthoDB" id="3268930at2"/>
<dbReference type="Proteomes" id="UP000000806">
    <property type="component" value="Chromosome"/>
</dbReference>
<dbReference type="InterPro" id="IPR051534">
    <property type="entry name" value="CBASS_pafABC_assoc_protein"/>
</dbReference>
<dbReference type="InterPro" id="IPR026881">
    <property type="entry name" value="WYL_dom"/>
</dbReference>
<dbReference type="PANTHER" id="PTHR34580">
    <property type="match status" value="1"/>
</dbReference>
<dbReference type="PANTHER" id="PTHR34580:SF3">
    <property type="entry name" value="PROTEIN PAFB"/>
    <property type="match status" value="1"/>
</dbReference>
<dbReference type="Pfam" id="PF13280">
    <property type="entry name" value="WYL"/>
    <property type="match status" value="1"/>
</dbReference>
<dbReference type="PROSITE" id="PS52050">
    <property type="entry name" value="WYL"/>
    <property type="match status" value="1"/>
</dbReference>
<reference key="1">
    <citation type="submission" date="1994-03" db="EMBL/GenBank/DDBJ databases">
        <authorList>
            <person name="Smith D.R."/>
            <person name="Robison K."/>
        </authorList>
    </citation>
    <scope>NUCLEOTIDE SEQUENCE [GENOMIC DNA]</scope>
</reference>
<reference key="2">
    <citation type="journal article" date="2001" name="Nature">
        <title>Massive gene decay in the leprosy bacillus.</title>
        <authorList>
            <person name="Cole S.T."/>
            <person name="Eiglmeier K."/>
            <person name="Parkhill J."/>
            <person name="James K.D."/>
            <person name="Thomson N.R."/>
            <person name="Wheeler P.R."/>
            <person name="Honore N."/>
            <person name="Garnier T."/>
            <person name="Churcher C.M."/>
            <person name="Harris D.E."/>
            <person name="Mungall K.L."/>
            <person name="Basham D."/>
            <person name="Brown D."/>
            <person name="Chillingworth T."/>
            <person name="Connor R."/>
            <person name="Davies R.M."/>
            <person name="Devlin K."/>
            <person name="Duthoy S."/>
            <person name="Feltwell T."/>
            <person name="Fraser A."/>
            <person name="Hamlin N."/>
            <person name="Holroyd S."/>
            <person name="Hornsby T."/>
            <person name="Jagels K."/>
            <person name="Lacroix C."/>
            <person name="Maclean J."/>
            <person name="Moule S."/>
            <person name="Murphy L.D."/>
            <person name="Oliver K."/>
            <person name="Quail M.A."/>
            <person name="Rajandream M.A."/>
            <person name="Rutherford K.M."/>
            <person name="Rutter S."/>
            <person name="Seeger K."/>
            <person name="Simon S."/>
            <person name="Simmonds M."/>
            <person name="Skelton J."/>
            <person name="Squares R."/>
            <person name="Squares S."/>
            <person name="Stevens K."/>
            <person name="Taylor K."/>
            <person name="Whitehead S."/>
            <person name="Woodward J.R."/>
            <person name="Barrell B.G."/>
        </authorList>
    </citation>
    <scope>NUCLEOTIDE SEQUENCE [LARGE SCALE GENOMIC DNA]</scope>
    <source>
        <strain>TN</strain>
    </source>
</reference>
<evidence type="ECO:0000250" key="1"/>
<evidence type="ECO:0000255" key="2">
    <source>
        <dbReference type="PROSITE-ProRule" id="PRU01395"/>
    </source>
</evidence>
<evidence type="ECO:0000305" key="3"/>
<protein>
    <recommendedName>
        <fullName>Protein PafB</fullName>
    </recommendedName>
</protein>
<gene>
    <name type="primary">pafB</name>
    <name type="ordered locus">ML1329</name>
    <name type="ORF">B2126_C3_266</name>
    <name type="ORF">MLCB2533.25</name>
</gene>
<organism>
    <name type="scientific">Mycobacterium leprae (strain TN)</name>
    <dbReference type="NCBI Taxonomy" id="272631"/>
    <lineage>
        <taxon>Bacteria</taxon>
        <taxon>Bacillati</taxon>
        <taxon>Actinomycetota</taxon>
        <taxon>Actinomycetes</taxon>
        <taxon>Mycobacteriales</taxon>
        <taxon>Mycobacteriaceae</taxon>
        <taxon>Mycobacterium</taxon>
    </lineage>
</organism>
<accession>P54076</accession>
<comment type="function">
    <text evidence="1">Does not seem to be involved in pupylation or substrate degradation.</text>
</comment>
<comment type="subunit">
    <text evidence="1">Interacts with PafC; with which it probably forms a heterocomplex.</text>
</comment>
<comment type="similarity">
    <text evidence="3">Belongs to the PafB family.</text>
</comment>
<proteinExistence type="inferred from homology"/>
<sequence>MATSKVERLVNLVIALLSTRGYMTAEKIRSSVAGYSDSPTVEAFSRMFERDKNELRDLGIPLEVGKVSALDPSEGYRINRDAYALPPVELTPDEAAAVAVATQLWESQELITATQGALLKLRAAGVDIDPLDTPVVIASSSGVSSLRGSEDFLSILLSAIGSRQAVQFPYRPSRAEPYTMRNVEPWGVITENSCWYLVGHDCDRNATRTFRLSRIGSEVAPIGPAGAVTVPDGVDLRRIVSDAVAEVSTGATARVWVVDGRATALRHAGRPAGVRRLGGRDGQVIELDIGSIDRLARDIAGHGADAVVLEPDALRDDVLIRLRAHAGTGPS</sequence>
<feature type="chain" id="PRO_0000103965" description="Protein PafB">
    <location>
        <begin position="1"/>
        <end position="331"/>
    </location>
</feature>
<feature type="domain" description="WYL" evidence="2">
    <location>
        <begin position="145"/>
        <end position="225"/>
    </location>
</feature>
<keyword id="KW-1185">Reference proteome</keyword>
<name>PAFB_MYCLE</name>